<gene>
    <name type="ordered locus">SAUSA300_1353</name>
</gene>
<reference key="1">
    <citation type="journal article" date="2006" name="Lancet">
        <title>Complete genome sequence of USA300, an epidemic clone of community-acquired meticillin-resistant Staphylococcus aureus.</title>
        <authorList>
            <person name="Diep B.A."/>
            <person name="Gill S.R."/>
            <person name="Chang R.F."/>
            <person name="Phan T.H."/>
            <person name="Chen J.H."/>
            <person name="Davidson M.G."/>
            <person name="Lin F."/>
            <person name="Lin J."/>
            <person name="Carleton H.A."/>
            <person name="Mongodin E.F."/>
            <person name="Sensabaugh G.F."/>
            <person name="Perdreau-Remington F."/>
        </authorList>
    </citation>
    <scope>NUCLEOTIDE SEQUENCE [LARGE SCALE GENOMIC DNA]</scope>
    <source>
        <strain>USA300</strain>
    </source>
</reference>
<sequence length="191" mass="22597">MSETFNQIKESFIEYLLFQYRFKSRIAVWVLNYIKVNEAKLANIHFVDTKINHHETLEIAEVGSHASAIQFTKRNIKLMNTNEIFDYIANHNCAFDIQIHFANVSKREQRLDDLIVAQLTESPSYQTYLHDLNSMAIDRHKHALLIDYLLHNIDLSLQMNEKQRFYQLTQILNTLKLVNKHNQFEDLADDN</sequence>
<feature type="chain" id="PRO_1000046731" description="UPF0302 protein SAUSA300_1353">
    <location>
        <begin position="1"/>
        <end position="191"/>
    </location>
</feature>
<comment type="similarity">
    <text evidence="1">Belongs to the UPF0302 family.</text>
</comment>
<protein>
    <recommendedName>
        <fullName evidence="1">UPF0302 protein SAUSA300_1353</fullName>
    </recommendedName>
</protein>
<name>Y1353_STAA3</name>
<proteinExistence type="inferred from homology"/>
<evidence type="ECO:0000255" key="1">
    <source>
        <dbReference type="HAMAP-Rule" id="MF_00760"/>
    </source>
</evidence>
<organism>
    <name type="scientific">Staphylococcus aureus (strain USA300)</name>
    <dbReference type="NCBI Taxonomy" id="367830"/>
    <lineage>
        <taxon>Bacteria</taxon>
        <taxon>Bacillati</taxon>
        <taxon>Bacillota</taxon>
        <taxon>Bacilli</taxon>
        <taxon>Bacillales</taxon>
        <taxon>Staphylococcaceae</taxon>
        <taxon>Staphylococcus</taxon>
    </lineage>
</organism>
<accession>Q2FGX8</accession>
<dbReference type="EMBL" id="CP000255">
    <property type="protein sequence ID" value="ABD21793.1"/>
    <property type="molecule type" value="Genomic_DNA"/>
</dbReference>
<dbReference type="RefSeq" id="WP_000004947.1">
    <property type="nucleotide sequence ID" value="NZ_CP027476.1"/>
</dbReference>
<dbReference type="SMR" id="Q2FGX8"/>
<dbReference type="KEGG" id="saa:SAUSA300_1353"/>
<dbReference type="HOGENOM" id="CLU_122408_0_0_9"/>
<dbReference type="OMA" id="YQFKSRI"/>
<dbReference type="Proteomes" id="UP000001939">
    <property type="component" value="Chromosome"/>
</dbReference>
<dbReference type="Gene3D" id="3.40.1530.30">
    <property type="entry name" value="Uncharacterised family UPF0302, N-terminal domain"/>
    <property type="match status" value="1"/>
</dbReference>
<dbReference type="HAMAP" id="MF_00760">
    <property type="entry name" value="UPF0302"/>
    <property type="match status" value="1"/>
</dbReference>
<dbReference type="InterPro" id="IPR014957">
    <property type="entry name" value="IDEAL_dom"/>
</dbReference>
<dbReference type="InterPro" id="IPR011188">
    <property type="entry name" value="UPF0302"/>
</dbReference>
<dbReference type="InterPro" id="IPR014963">
    <property type="entry name" value="UPF0302_N"/>
</dbReference>
<dbReference type="InterPro" id="IPR038091">
    <property type="entry name" value="UPF0302_N_sf"/>
</dbReference>
<dbReference type="Pfam" id="PF08858">
    <property type="entry name" value="IDEAL"/>
    <property type="match status" value="1"/>
</dbReference>
<dbReference type="Pfam" id="PF08864">
    <property type="entry name" value="UPF0302"/>
    <property type="match status" value="1"/>
</dbReference>
<dbReference type="PIRSF" id="PIRSF007165">
    <property type="entry name" value="UCP007165"/>
    <property type="match status" value="1"/>
</dbReference>
<dbReference type="SMART" id="SM00914">
    <property type="entry name" value="IDEAL"/>
    <property type="match status" value="1"/>
</dbReference>